<accession>Q9KYP1</accession>
<reference key="1">
    <citation type="journal article" date="2002" name="Nature">
        <title>Complete genome sequence of the model actinomycete Streptomyces coelicolor A3(2).</title>
        <authorList>
            <person name="Bentley S.D."/>
            <person name="Chater K.F."/>
            <person name="Cerdeno-Tarraga A.-M."/>
            <person name="Challis G.L."/>
            <person name="Thomson N.R."/>
            <person name="James K.D."/>
            <person name="Harris D.E."/>
            <person name="Quail M.A."/>
            <person name="Kieser H."/>
            <person name="Harper D."/>
            <person name="Bateman A."/>
            <person name="Brown S."/>
            <person name="Chandra G."/>
            <person name="Chen C.W."/>
            <person name="Collins M."/>
            <person name="Cronin A."/>
            <person name="Fraser A."/>
            <person name="Goble A."/>
            <person name="Hidalgo J."/>
            <person name="Hornsby T."/>
            <person name="Howarth S."/>
            <person name="Huang C.-H."/>
            <person name="Kieser T."/>
            <person name="Larke L."/>
            <person name="Murphy L.D."/>
            <person name="Oliver K."/>
            <person name="O'Neil S."/>
            <person name="Rabbinowitsch E."/>
            <person name="Rajandream M.A."/>
            <person name="Rutherford K.M."/>
            <person name="Rutter S."/>
            <person name="Seeger K."/>
            <person name="Saunders D."/>
            <person name="Sharp S."/>
            <person name="Squares R."/>
            <person name="Squares S."/>
            <person name="Taylor K."/>
            <person name="Warren T."/>
            <person name="Wietzorrek A."/>
            <person name="Woodward J.R."/>
            <person name="Barrell B.G."/>
            <person name="Parkhill J."/>
            <person name="Hopwood D.A."/>
        </authorList>
    </citation>
    <scope>NUCLEOTIDE SEQUENCE [LARGE SCALE GENOMIC DNA]</scope>
    <source>
        <strain>ATCC BAA-471 / A3(2) / M145</strain>
    </source>
</reference>
<evidence type="ECO:0000255" key="1">
    <source>
        <dbReference type="HAMAP-Rule" id="MF_01984"/>
    </source>
</evidence>
<comment type="function">
    <text evidence="1">Flavin prenyltransferase that catalyzes the synthesis of the prenylated FMN cofactor (prenyl-FMN) for 4-hydroxy-3-polyprenylbenzoic acid decarboxylase UbiD. The prenyltransferase is metal-independent and links a dimethylallyl moiety from dimethylallyl monophosphate (DMAP) to the flavin N5 and C6 atoms of FMN.</text>
</comment>
<comment type="catalytic activity">
    <reaction evidence="1">
        <text>dimethylallyl phosphate + FMNH2 = prenylated FMNH2 + phosphate</text>
        <dbReference type="Rhea" id="RHEA:37743"/>
        <dbReference type="ChEBI" id="CHEBI:43474"/>
        <dbReference type="ChEBI" id="CHEBI:57618"/>
        <dbReference type="ChEBI" id="CHEBI:87467"/>
        <dbReference type="ChEBI" id="CHEBI:88052"/>
        <dbReference type="EC" id="2.5.1.129"/>
    </reaction>
</comment>
<comment type="similarity">
    <text evidence="1">Belongs to the UbiX/PAD1 family.</text>
</comment>
<protein>
    <recommendedName>
        <fullName evidence="1">Flavin prenyltransferase UbiX</fullName>
        <ecNumber evidence="1">2.5.1.129</ecNumber>
    </recommendedName>
</protein>
<proteinExistence type="inferred from homology"/>
<name>UBIX_STRCO</name>
<sequence length="216" mass="22615">MPWIVGVSGASGTPYAAAVLRALLAAGESVDLVVSRASRLTLLDETGISFRDAHWRHDLREWLARGADGKPDTFDADVSGVRHWSAGDLAAGPSSGSYPTKGMLIVPASTACVAGVALGLSKDLLQRAASVTLKERRRLVVAVRETPLDGRTLRHLVTLDDAGASVVPASPAFYAGATHIQDLVDFVAGRVLDAAGVGHGLYRRWRGDLGGARPTG</sequence>
<organism>
    <name type="scientific">Streptomyces coelicolor (strain ATCC BAA-471 / A3(2) / M145)</name>
    <dbReference type="NCBI Taxonomy" id="100226"/>
    <lineage>
        <taxon>Bacteria</taxon>
        <taxon>Bacillati</taxon>
        <taxon>Actinomycetota</taxon>
        <taxon>Actinomycetes</taxon>
        <taxon>Kitasatosporales</taxon>
        <taxon>Streptomycetaceae</taxon>
        <taxon>Streptomyces</taxon>
        <taxon>Streptomyces albidoflavus group</taxon>
    </lineage>
</organism>
<feature type="chain" id="PRO_0000134972" description="Flavin prenyltransferase UbiX">
    <location>
        <begin position="1"/>
        <end position="216"/>
    </location>
</feature>
<feature type="binding site" evidence="1">
    <location>
        <begin position="9"/>
        <end position="11"/>
    </location>
    <ligand>
        <name>FMN</name>
        <dbReference type="ChEBI" id="CHEBI:58210"/>
    </ligand>
</feature>
<feature type="binding site" evidence="1">
    <location>
        <position position="35"/>
    </location>
    <ligand>
        <name>FMN</name>
        <dbReference type="ChEBI" id="CHEBI:58210"/>
    </ligand>
</feature>
<feature type="binding site" evidence="1">
    <location>
        <position position="144"/>
    </location>
    <ligand>
        <name>FMN</name>
        <dbReference type="ChEBI" id="CHEBI:58210"/>
    </ligand>
</feature>
<feature type="binding site" evidence="1">
    <location>
        <position position="174"/>
    </location>
    <ligand>
        <name>dimethylallyl phosphate</name>
        <dbReference type="ChEBI" id="CHEBI:88052"/>
    </ligand>
</feature>
<feature type="binding site" evidence="1">
    <location>
        <position position="190"/>
    </location>
    <ligand>
        <name>dimethylallyl phosphate</name>
        <dbReference type="ChEBI" id="CHEBI:88052"/>
    </ligand>
</feature>
<gene>
    <name evidence="1" type="primary">ubiX</name>
    <name type="ordered locus">SCO4492</name>
    <name type="ORF">SCD69.12</name>
</gene>
<keyword id="KW-0285">Flavoprotein</keyword>
<keyword id="KW-0288">FMN</keyword>
<keyword id="KW-0637">Prenyltransferase</keyword>
<keyword id="KW-1185">Reference proteome</keyword>
<keyword id="KW-0808">Transferase</keyword>
<dbReference type="EC" id="2.5.1.129" evidence="1"/>
<dbReference type="EMBL" id="AL939120">
    <property type="protein sequence ID" value="CAB92113.1"/>
    <property type="molecule type" value="Genomic_DNA"/>
</dbReference>
<dbReference type="RefSeq" id="NP_628657.1">
    <property type="nucleotide sequence ID" value="NC_003888.3"/>
</dbReference>
<dbReference type="RefSeq" id="WP_003974457.1">
    <property type="nucleotide sequence ID" value="NZ_VNID01000017.1"/>
</dbReference>
<dbReference type="SMR" id="Q9KYP1"/>
<dbReference type="STRING" id="100226.gene:17762137"/>
<dbReference type="PaxDb" id="100226-SCO4492"/>
<dbReference type="KEGG" id="sco:SCO4492"/>
<dbReference type="PATRIC" id="fig|100226.15.peg.4562"/>
<dbReference type="eggNOG" id="COG0163">
    <property type="taxonomic scope" value="Bacteria"/>
</dbReference>
<dbReference type="HOGENOM" id="CLU_074522_0_0_11"/>
<dbReference type="InParanoid" id="Q9KYP1"/>
<dbReference type="OrthoDB" id="9781577at2"/>
<dbReference type="PhylomeDB" id="Q9KYP1"/>
<dbReference type="Proteomes" id="UP000001973">
    <property type="component" value="Chromosome"/>
</dbReference>
<dbReference type="GO" id="GO:0016831">
    <property type="term" value="F:carboxy-lyase activity"/>
    <property type="evidence" value="ECO:0000318"/>
    <property type="project" value="GO_Central"/>
</dbReference>
<dbReference type="GO" id="GO:0106141">
    <property type="term" value="F:flavin prenyltransferase activity"/>
    <property type="evidence" value="ECO:0007669"/>
    <property type="project" value="UniProtKB-EC"/>
</dbReference>
<dbReference type="FunFam" id="3.40.50.1950:FF:000007">
    <property type="entry name" value="Flavin prenyltransferase UbiX"/>
    <property type="match status" value="1"/>
</dbReference>
<dbReference type="Gene3D" id="3.40.50.1950">
    <property type="entry name" value="Flavin prenyltransferase-like"/>
    <property type="match status" value="1"/>
</dbReference>
<dbReference type="HAMAP" id="MF_01984">
    <property type="entry name" value="ubiX_pad"/>
    <property type="match status" value="1"/>
</dbReference>
<dbReference type="InterPro" id="IPR036551">
    <property type="entry name" value="Flavin_trans-like"/>
</dbReference>
<dbReference type="InterPro" id="IPR003382">
    <property type="entry name" value="Flavoprotein"/>
</dbReference>
<dbReference type="InterPro" id="IPR004507">
    <property type="entry name" value="UbiX-like"/>
</dbReference>
<dbReference type="NCBIfam" id="TIGR00421">
    <property type="entry name" value="ubiX_pad"/>
    <property type="match status" value="1"/>
</dbReference>
<dbReference type="Pfam" id="PF02441">
    <property type="entry name" value="Flavoprotein"/>
    <property type="match status" value="1"/>
</dbReference>
<dbReference type="SUPFAM" id="SSF52507">
    <property type="entry name" value="Homo-oligomeric flavin-containing Cys decarboxylases, HFCD"/>
    <property type="match status" value="1"/>
</dbReference>